<accession>Q1LHS4</accession>
<proteinExistence type="inferred from homology"/>
<name>Y3430_CUPMC</name>
<sequence length="134" mass="14421">MPARPASSTTRQGALAEDRALAYLQRQGLVAVERNYRCKGGEIDLIMRAADDTLVFVEVRKRGGRGFGGAAASITLTKQRRVLRAASHYLATLDRLPPCRVDVVALDPGRLEWLRNAFDLGALDSEGGGEGPAS</sequence>
<organism>
    <name type="scientific">Cupriavidus metallidurans (strain ATCC 43123 / DSM 2839 / NBRC 102507 / CH34)</name>
    <name type="common">Ralstonia metallidurans</name>
    <dbReference type="NCBI Taxonomy" id="266264"/>
    <lineage>
        <taxon>Bacteria</taxon>
        <taxon>Pseudomonadati</taxon>
        <taxon>Pseudomonadota</taxon>
        <taxon>Betaproteobacteria</taxon>
        <taxon>Burkholderiales</taxon>
        <taxon>Burkholderiaceae</taxon>
        <taxon>Cupriavidus</taxon>
    </lineage>
</organism>
<dbReference type="EMBL" id="CP000352">
    <property type="protein sequence ID" value="ABF10302.1"/>
    <property type="molecule type" value="Genomic_DNA"/>
</dbReference>
<dbReference type="SMR" id="Q1LHS4"/>
<dbReference type="STRING" id="266264.Rmet_3430"/>
<dbReference type="KEGG" id="rme:Rmet_3430"/>
<dbReference type="eggNOG" id="COG0792">
    <property type="taxonomic scope" value="Bacteria"/>
</dbReference>
<dbReference type="HOGENOM" id="CLU_115353_1_0_4"/>
<dbReference type="Proteomes" id="UP000002429">
    <property type="component" value="Chromosome"/>
</dbReference>
<dbReference type="GO" id="GO:0003676">
    <property type="term" value="F:nucleic acid binding"/>
    <property type="evidence" value="ECO:0007669"/>
    <property type="project" value="InterPro"/>
</dbReference>
<dbReference type="Gene3D" id="3.40.1350.10">
    <property type="match status" value="1"/>
</dbReference>
<dbReference type="HAMAP" id="MF_00048">
    <property type="entry name" value="UPF0102"/>
    <property type="match status" value="1"/>
</dbReference>
<dbReference type="InterPro" id="IPR011335">
    <property type="entry name" value="Restrct_endonuc-II-like"/>
</dbReference>
<dbReference type="InterPro" id="IPR011856">
    <property type="entry name" value="tRNA_endonuc-like_dom_sf"/>
</dbReference>
<dbReference type="InterPro" id="IPR003509">
    <property type="entry name" value="UPF0102_YraN-like"/>
</dbReference>
<dbReference type="NCBIfam" id="NF009150">
    <property type="entry name" value="PRK12497.1-3"/>
    <property type="match status" value="1"/>
</dbReference>
<dbReference type="NCBIfam" id="TIGR00252">
    <property type="entry name" value="YraN family protein"/>
    <property type="match status" value="1"/>
</dbReference>
<dbReference type="PANTHER" id="PTHR34039">
    <property type="entry name" value="UPF0102 PROTEIN YRAN"/>
    <property type="match status" value="1"/>
</dbReference>
<dbReference type="PANTHER" id="PTHR34039:SF1">
    <property type="entry name" value="UPF0102 PROTEIN YRAN"/>
    <property type="match status" value="1"/>
</dbReference>
<dbReference type="Pfam" id="PF02021">
    <property type="entry name" value="UPF0102"/>
    <property type="match status" value="1"/>
</dbReference>
<dbReference type="SUPFAM" id="SSF52980">
    <property type="entry name" value="Restriction endonuclease-like"/>
    <property type="match status" value="1"/>
</dbReference>
<keyword id="KW-1185">Reference proteome</keyword>
<evidence type="ECO:0000255" key="1">
    <source>
        <dbReference type="HAMAP-Rule" id="MF_00048"/>
    </source>
</evidence>
<reference key="1">
    <citation type="journal article" date="2010" name="PLoS ONE">
        <title>The complete genome sequence of Cupriavidus metallidurans strain CH34, a master survivalist in harsh and anthropogenic environments.</title>
        <authorList>
            <person name="Janssen P.J."/>
            <person name="Van Houdt R."/>
            <person name="Moors H."/>
            <person name="Monsieurs P."/>
            <person name="Morin N."/>
            <person name="Michaux A."/>
            <person name="Benotmane M.A."/>
            <person name="Leys N."/>
            <person name="Vallaeys T."/>
            <person name="Lapidus A."/>
            <person name="Monchy S."/>
            <person name="Medigue C."/>
            <person name="Taghavi S."/>
            <person name="McCorkle S."/>
            <person name="Dunn J."/>
            <person name="van der Lelie D."/>
            <person name="Mergeay M."/>
        </authorList>
    </citation>
    <scope>NUCLEOTIDE SEQUENCE [LARGE SCALE GENOMIC DNA]</scope>
    <source>
        <strain>ATCC 43123 / DSM 2839 / NBRC 102507 / CH34</strain>
    </source>
</reference>
<feature type="chain" id="PRO_1000009248" description="UPF0102 protein Rmet_3430">
    <location>
        <begin position="1"/>
        <end position="134"/>
    </location>
</feature>
<protein>
    <recommendedName>
        <fullName evidence="1">UPF0102 protein Rmet_3430</fullName>
    </recommendedName>
</protein>
<comment type="similarity">
    <text evidence="1">Belongs to the UPF0102 family.</text>
</comment>
<gene>
    <name type="ordered locus">Rmet_3430</name>
</gene>